<accession>Q290S5</accession>
<accession>Q5MBD9</accession>
<keyword id="KW-0131">Cell cycle</keyword>
<keyword id="KW-0158">Chromosome</keyword>
<keyword id="KW-0159">Chromosome partition</keyword>
<keyword id="KW-0469">Meiosis</keyword>
<keyword id="KW-0479">Metal-binding</keyword>
<keyword id="KW-0539">Nucleus</keyword>
<keyword id="KW-1185">Reference proteome</keyword>
<keyword id="KW-0677">Repeat</keyword>
<keyword id="KW-0862">Zinc</keyword>
<keyword id="KW-0863">Zinc-finger</keyword>
<comment type="function">
    <text evidence="2">Specifically required in males for proper segregation of autosomal bivalents at meiosis I. Expression is required in the male germ line prior to spermatocyte stage S4. May have a role as a bridging molecule maintaining adhesion to hold autosome bivalents together via heterochromatic connections (By similarity).</text>
</comment>
<comment type="subcellular location">
    <subcellularLocation>
        <location evidence="2">Nucleus</location>
    </subcellularLocation>
    <subcellularLocation>
        <location evidence="1">Chromosome</location>
    </subcellularLocation>
    <text evidence="2">Male meiotic chromosomes.</text>
</comment>
<comment type="miscellaneous">
    <text evidence="2">Drosophilid specific gene duplication generates rgr and tef. Teflon has a function unique to Drosophilids.</text>
</comment>
<comment type="similarity">
    <text evidence="5">Belongs to the Teflon family.</text>
</comment>
<comment type="sequence caution" evidence="5">
    <conflict type="erroneous gene model prediction">
        <sequence resource="EMBL-CDS" id="EAL25287"/>
    </conflict>
</comment>
<name>TEF_DROPS</name>
<gene>
    <name evidence="2" type="primary">tef</name>
    <name type="ORF">GA21437</name>
</gene>
<feature type="chain" id="PRO_0000377410" description="Protein teflon">
    <location>
        <begin position="1"/>
        <end position="703"/>
    </location>
</feature>
<feature type="zinc finger region" description="C2H2-type 1" evidence="3">
    <location>
        <begin position="32"/>
        <end position="55"/>
    </location>
</feature>
<feature type="zinc finger region" description="C2H2-type 2" evidence="3">
    <location>
        <begin position="649"/>
        <end position="672"/>
    </location>
</feature>
<feature type="zinc finger region" description="C2H2-type 3" evidence="3">
    <location>
        <begin position="677"/>
        <end position="700"/>
    </location>
</feature>
<feature type="region of interest" description="Disordered" evidence="4">
    <location>
        <begin position="78"/>
        <end position="111"/>
    </location>
</feature>
<feature type="region of interest" description="Disordered" evidence="4">
    <location>
        <begin position="138"/>
        <end position="161"/>
    </location>
</feature>
<feature type="region of interest" description="Disordered" evidence="4">
    <location>
        <begin position="339"/>
        <end position="434"/>
    </location>
</feature>
<feature type="compositionally biased region" description="Polar residues" evidence="4">
    <location>
        <begin position="84"/>
        <end position="94"/>
    </location>
</feature>
<feature type="compositionally biased region" description="Polar residues" evidence="4">
    <location>
        <begin position="138"/>
        <end position="147"/>
    </location>
</feature>
<feature type="compositionally biased region" description="Basic and acidic residues" evidence="4">
    <location>
        <begin position="148"/>
        <end position="161"/>
    </location>
</feature>
<feature type="compositionally biased region" description="Polar residues" evidence="4">
    <location>
        <begin position="339"/>
        <end position="352"/>
    </location>
</feature>
<feature type="compositionally biased region" description="Polar residues" evidence="4">
    <location>
        <begin position="364"/>
        <end position="373"/>
    </location>
</feature>
<dbReference type="EMBL" id="AY840221">
    <property type="protein sequence ID" value="AAW24439.2"/>
    <property type="molecule type" value="mRNA"/>
</dbReference>
<dbReference type="EMBL" id="CM000071">
    <property type="protein sequence ID" value="EAL25287.2"/>
    <property type="status" value="ALT_SEQ"/>
    <property type="molecule type" value="Genomic_DNA"/>
</dbReference>
<dbReference type="FunCoup" id="Q290S5">
    <property type="interactions" value="193"/>
</dbReference>
<dbReference type="STRING" id="46245.Q290S5"/>
<dbReference type="eggNOG" id="ENOG502T9CV">
    <property type="taxonomic scope" value="Eukaryota"/>
</dbReference>
<dbReference type="InParanoid" id="Q290S5"/>
<dbReference type="Proteomes" id="UP000001819">
    <property type="component" value="Unplaced"/>
</dbReference>
<dbReference type="GO" id="GO:0030849">
    <property type="term" value="C:autosome"/>
    <property type="evidence" value="ECO:0000250"/>
    <property type="project" value="UniProtKB"/>
</dbReference>
<dbReference type="GO" id="GO:0005634">
    <property type="term" value="C:nucleus"/>
    <property type="evidence" value="ECO:0007669"/>
    <property type="project" value="UniProtKB-SubCell"/>
</dbReference>
<dbReference type="GO" id="GO:0008270">
    <property type="term" value="F:zinc ion binding"/>
    <property type="evidence" value="ECO:0007669"/>
    <property type="project" value="UniProtKB-KW"/>
</dbReference>
<dbReference type="GO" id="GO:0051308">
    <property type="term" value="P:male meiosis chromosome separation"/>
    <property type="evidence" value="ECO:0000250"/>
    <property type="project" value="UniProtKB"/>
</dbReference>
<dbReference type="Gene3D" id="3.30.160.60">
    <property type="entry name" value="Classic Zinc Finger"/>
    <property type="match status" value="1"/>
</dbReference>
<dbReference type="InterPro" id="IPR036236">
    <property type="entry name" value="Znf_C2H2_sf"/>
</dbReference>
<dbReference type="InterPro" id="IPR013087">
    <property type="entry name" value="Znf_C2H2_type"/>
</dbReference>
<dbReference type="SMART" id="SM00355">
    <property type="entry name" value="ZnF_C2H2"/>
    <property type="match status" value="3"/>
</dbReference>
<dbReference type="SUPFAM" id="SSF57667">
    <property type="entry name" value="beta-beta-alpha zinc fingers"/>
    <property type="match status" value="1"/>
</dbReference>
<dbReference type="PROSITE" id="PS00028">
    <property type="entry name" value="ZINC_FINGER_C2H2_1"/>
    <property type="match status" value="3"/>
</dbReference>
<dbReference type="PROSITE" id="PS50157">
    <property type="entry name" value="ZINC_FINGER_C2H2_2"/>
    <property type="match status" value="2"/>
</dbReference>
<sequence length="703" mass="80060">MSSFLDILGDGHVNFEKCGDVVVSPKDNMVAMFCHFCKDIFTHLPEFMRHLQWSHSDVLQFTKEQNVYRVEELMSLETSEDDVQSQANSCSSGDSGLAGEMEDADGEPGSSECLANNLEIMNALAAFDVDVDGLNNVSHEQSYSKTPPDSRTEGFRCARKPGRVEKPPSICDLKSYNITRHSRKREAIKQRLSSVKKRIMRSLENDVISPRLNKLRSKLNNSLSSNISGPPKQSKMPSLLENSSVNELPAVLESTNPPNFDSEQPYVVSTTIKPSIRPCPSRTAVKTDRNISHQPVARRSTVNIERVDILPPINIKQKMKMSAKDIPFWESIIISSVASQQPSELNTTNNAVDQPPKRPERRSSLTVISSSPIQAMKPMRRSSMTRENTSPESSGILRSGEVESPAKANKRTKDSFEETSSSNEKGNAKRSKLEQNRCSMNFSLSASVTEYIRSDLKTSKLDLDSILRLAEPLESDYFKNTIVEDQVKNATKMGSPQKEFTKLQIGVKPEMEALKEDLRLLKTVGLLVLKDSCFEDKLPFEQSESFRKTAAKFSKIYHTYDTIWSYRKTKTIGVHQRLTEQLNSFTEEVNREIDCHLTTNEIKRILNLINSWYAYQIDQRFFRKATLSYSVEHYMFLFHFLPKINPTVYFCECCEEIFPNEARYKKHVQSVHAVHAFTCSECGKSFKRLYFYEKHLKTVHLKP</sequence>
<evidence type="ECO:0000250" key="1"/>
<evidence type="ECO:0000250" key="2">
    <source>
        <dbReference type="UniProtKB" id="Q7K4M4"/>
    </source>
</evidence>
<evidence type="ECO:0000255" key="3">
    <source>
        <dbReference type="PROSITE-ProRule" id="PRU00042"/>
    </source>
</evidence>
<evidence type="ECO:0000256" key="4">
    <source>
        <dbReference type="SAM" id="MobiDB-lite"/>
    </source>
</evidence>
<evidence type="ECO:0000305" key="5"/>
<evidence type="ECO:0000312" key="6">
    <source>
        <dbReference type="EMBL" id="AAW24439.2"/>
    </source>
</evidence>
<evidence type="ECO:0000312" key="7">
    <source>
        <dbReference type="EMBL" id="EAL25287.2"/>
    </source>
</evidence>
<proteinExistence type="evidence at transcript level"/>
<protein>
    <recommendedName>
        <fullName evidence="2">Protein teflon</fullName>
    </recommendedName>
</protein>
<organism>
    <name type="scientific">Drosophila pseudoobscura pseudoobscura</name>
    <name type="common">Fruit fly</name>
    <dbReference type="NCBI Taxonomy" id="46245"/>
    <lineage>
        <taxon>Eukaryota</taxon>
        <taxon>Metazoa</taxon>
        <taxon>Ecdysozoa</taxon>
        <taxon>Arthropoda</taxon>
        <taxon>Hexapoda</taxon>
        <taxon>Insecta</taxon>
        <taxon>Pterygota</taxon>
        <taxon>Neoptera</taxon>
        <taxon>Endopterygota</taxon>
        <taxon>Diptera</taxon>
        <taxon>Brachycera</taxon>
        <taxon>Muscomorpha</taxon>
        <taxon>Ephydroidea</taxon>
        <taxon>Drosophilidae</taxon>
        <taxon>Drosophila</taxon>
        <taxon>Sophophora</taxon>
    </lineage>
</organism>
<reference evidence="6" key="1">
    <citation type="journal article" date="2006" name="Genetics">
        <title>Molecular characterization of teflon, a gene required for meiotic autosome segregation in male Drosophila melanogaster.</title>
        <authorList>
            <person name="Arya G.H."/>
            <person name="Lodico M.J.P."/>
            <person name="Ahmad O.I."/>
            <person name="Amin R."/>
            <person name="Tomkiel J.E."/>
        </authorList>
    </citation>
    <scope>NUCLEOTIDE SEQUENCE [MRNA]</scope>
    <source>
        <strain>MV2-25 / Tucson 14011-0121.94</strain>
    </source>
</reference>
<reference evidence="7" key="2">
    <citation type="journal article" date="2005" name="Genome Res.">
        <title>Comparative genome sequencing of Drosophila pseudoobscura: chromosomal, gene, and cis-element evolution.</title>
        <authorList>
            <person name="Richards S."/>
            <person name="Liu Y."/>
            <person name="Bettencourt B.R."/>
            <person name="Hradecky P."/>
            <person name="Letovsky S."/>
            <person name="Nielsen R."/>
            <person name="Thornton K."/>
            <person name="Hubisz M.J."/>
            <person name="Chen R."/>
            <person name="Meisel R.P."/>
            <person name="Couronne O."/>
            <person name="Hua S."/>
            <person name="Smith M.A."/>
            <person name="Zhang P."/>
            <person name="Liu J."/>
            <person name="Bussemaker H.J."/>
            <person name="van Batenburg M.F."/>
            <person name="Howells S.L."/>
            <person name="Scherer S.E."/>
            <person name="Sodergren E."/>
            <person name="Matthews B.B."/>
            <person name="Crosby M.A."/>
            <person name="Schroeder A.J."/>
            <person name="Ortiz-Barrientos D."/>
            <person name="Rives C.M."/>
            <person name="Metzker M.L."/>
            <person name="Muzny D.M."/>
            <person name="Scott G."/>
            <person name="Steffen D."/>
            <person name="Wheeler D.A."/>
            <person name="Worley K.C."/>
            <person name="Havlak P."/>
            <person name="Durbin K.J."/>
            <person name="Egan A."/>
            <person name="Gill R."/>
            <person name="Hume J."/>
            <person name="Morgan M.B."/>
            <person name="Miner G."/>
            <person name="Hamilton C."/>
            <person name="Huang Y."/>
            <person name="Waldron L."/>
            <person name="Verduzco D."/>
            <person name="Clerc-Blankenburg K.P."/>
            <person name="Dubchak I."/>
            <person name="Noor M.A.F."/>
            <person name="Anderson W."/>
            <person name="White K.P."/>
            <person name="Clark A.G."/>
            <person name="Schaeffer S.W."/>
            <person name="Gelbart W.M."/>
            <person name="Weinstock G.M."/>
            <person name="Gibbs R.A."/>
        </authorList>
    </citation>
    <scope>NUCLEOTIDE SEQUENCE [LARGE SCALE GENOMIC DNA]</scope>
    <source>
        <strain>MV2-25 / Tucson 14011-0121.94</strain>
    </source>
</reference>